<keyword id="KW-0378">Hydrolase</keyword>
<keyword id="KW-0479">Metal-binding</keyword>
<keyword id="KW-1185">Reference proteome</keyword>
<keyword id="KW-0862">Zinc</keyword>
<reference key="1">
    <citation type="journal article" date="2009" name="PLoS Genet.">
        <title>Organised genome dynamics in the Escherichia coli species results in highly diverse adaptive paths.</title>
        <authorList>
            <person name="Touchon M."/>
            <person name="Hoede C."/>
            <person name="Tenaillon O."/>
            <person name="Barbe V."/>
            <person name="Baeriswyl S."/>
            <person name="Bidet P."/>
            <person name="Bingen E."/>
            <person name="Bonacorsi S."/>
            <person name="Bouchier C."/>
            <person name="Bouvet O."/>
            <person name="Calteau A."/>
            <person name="Chiapello H."/>
            <person name="Clermont O."/>
            <person name="Cruveiller S."/>
            <person name="Danchin A."/>
            <person name="Diard M."/>
            <person name="Dossat C."/>
            <person name="Karoui M.E."/>
            <person name="Frapy E."/>
            <person name="Garry L."/>
            <person name="Ghigo J.M."/>
            <person name="Gilles A.M."/>
            <person name="Johnson J."/>
            <person name="Le Bouguenec C."/>
            <person name="Lescat M."/>
            <person name="Mangenot S."/>
            <person name="Martinez-Jehanne V."/>
            <person name="Matic I."/>
            <person name="Nassif X."/>
            <person name="Oztas S."/>
            <person name="Petit M.A."/>
            <person name="Pichon C."/>
            <person name="Rouy Z."/>
            <person name="Ruf C.S."/>
            <person name="Schneider D."/>
            <person name="Tourret J."/>
            <person name="Vacherie B."/>
            <person name="Vallenet D."/>
            <person name="Medigue C."/>
            <person name="Rocha E.P.C."/>
            <person name="Denamur E."/>
        </authorList>
    </citation>
    <scope>NUCLEOTIDE SEQUENCE [LARGE SCALE GENOMIC DNA]</scope>
    <source>
        <strain>S88 / ExPEC</strain>
    </source>
</reference>
<feature type="chain" id="PRO_1000144758" description="Hydroxyacylglutathione hydrolase">
    <location>
        <begin position="1"/>
        <end position="251"/>
    </location>
</feature>
<feature type="binding site" evidence="1">
    <location>
        <position position="53"/>
    </location>
    <ligand>
        <name>Zn(2+)</name>
        <dbReference type="ChEBI" id="CHEBI:29105"/>
        <label>1</label>
    </ligand>
</feature>
<feature type="binding site" evidence="1">
    <location>
        <position position="55"/>
    </location>
    <ligand>
        <name>Zn(2+)</name>
        <dbReference type="ChEBI" id="CHEBI:29105"/>
        <label>1</label>
    </ligand>
</feature>
<feature type="binding site" evidence="1">
    <location>
        <position position="57"/>
    </location>
    <ligand>
        <name>Zn(2+)</name>
        <dbReference type="ChEBI" id="CHEBI:29105"/>
        <label>2</label>
    </ligand>
</feature>
<feature type="binding site" evidence="1">
    <location>
        <position position="58"/>
    </location>
    <ligand>
        <name>Zn(2+)</name>
        <dbReference type="ChEBI" id="CHEBI:29105"/>
        <label>2</label>
    </ligand>
</feature>
<feature type="binding site" evidence="1">
    <location>
        <position position="110"/>
    </location>
    <ligand>
        <name>Zn(2+)</name>
        <dbReference type="ChEBI" id="CHEBI:29105"/>
        <label>1</label>
    </ligand>
</feature>
<feature type="binding site" evidence="1">
    <location>
        <position position="127"/>
    </location>
    <ligand>
        <name>Zn(2+)</name>
        <dbReference type="ChEBI" id="CHEBI:29105"/>
        <label>1</label>
    </ligand>
</feature>
<feature type="binding site" evidence="1">
    <location>
        <position position="127"/>
    </location>
    <ligand>
        <name>Zn(2+)</name>
        <dbReference type="ChEBI" id="CHEBI:29105"/>
        <label>2</label>
    </ligand>
</feature>
<feature type="binding site" evidence="1">
    <location>
        <position position="165"/>
    </location>
    <ligand>
        <name>Zn(2+)</name>
        <dbReference type="ChEBI" id="CHEBI:29105"/>
        <label>2</label>
    </ligand>
</feature>
<accession>B7MBI8</accession>
<proteinExistence type="inferred from homology"/>
<organism>
    <name type="scientific">Escherichia coli O45:K1 (strain S88 / ExPEC)</name>
    <dbReference type="NCBI Taxonomy" id="585035"/>
    <lineage>
        <taxon>Bacteria</taxon>
        <taxon>Pseudomonadati</taxon>
        <taxon>Pseudomonadota</taxon>
        <taxon>Gammaproteobacteria</taxon>
        <taxon>Enterobacterales</taxon>
        <taxon>Enterobacteriaceae</taxon>
        <taxon>Escherichia</taxon>
    </lineage>
</organism>
<evidence type="ECO:0000255" key="1">
    <source>
        <dbReference type="HAMAP-Rule" id="MF_01374"/>
    </source>
</evidence>
<dbReference type="EC" id="3.1.2.6" evidence="1"/>
<dbReference type="EMBL" id="CU928161">
    <property type="protein sequence ID" value="CAR01582.1"/>
    <property type="molecule type" value="Genomic_DNA"/>
</dbReference>
<dbReference type="RefSeq" id="WP_001052741.1">
    <property type="nucleotide sequence ID" value="NC_011742.1"/>
</dbReference>
<dbReference type="SMR" id="B7MBI8"/>
<dbReference type="KEGG" id="ecz:ECS88_0227"/>
<dbReference type="HOGENOM" id="CLU_030571_4_1_6"/>
<dbReference type="UniPathway" id="UPA00619">
    <property type="reaction ID" value="UER00676"/>
</dbReference>
<dbReference type="Proteomes" id="UP000000747">
    <property type="component" value="Chromosome"/>
</dbReference>
<dbReference type="GO" id="GO:0004416">
    <property type="term" value="F:hydroxyacylglutathione hydrolase activity"/>
    <property type="evidence" value="ECO:0007669"/>
    <property type="project" value="UniProtKB-UniRule"/>
</dbReference>
<dbReference type="GO" id="GO:0046872">
    <property type="term" value="F:metal ion binding"/>
    <property type="evidence" value="ECO:0007669"/>
    <property type="project" value="UniProtKB-KW"/>
</dbReference>
<dbReference type="GO" id="GO:0019243">
    <property type="term" value="P:methylglyoxal catabolic process to D-lactate via S-lactoyl-glutathione"/>
    <property type="evidence" value="ECO:0007669"/>
    <property type="project" value="InterPro"/>
</dbReference>
<dbReference type="CDD" id="cd07723">
    <property type="entry name" value="hydroxyacylglutathione_hydrolase_MBL-fold"/>
    <property type="match status" value="1"/>
</dbReference>
<dbReference type="FunFam" id="3.60.15.10:FF:000012">
    <property type="entry name" value="Hydroxyacylglutathione hydrolase"/>
    <property type="match status" value="1"/>
</dbReference>
<dbReference type="Gene3D" id="3.60.15.10">
    <property type="entry name" value="Ribonuclease Z/Hydroxyacylglutathione hydrolase-like"/>
    <property type="match status" value="1"/>
</dbReference>
<dbReference type="HAMAP" id="MF_01374">
    <property type="entry name" value="Glyoxalase_2"/>
    <property type="match status" value="1"/>
</dbReference>
<dbReference type="InterPro" id="IPR035680">
    <property type="entry name" value="Clx_II_MBL"/>
</dbReference>
<dbReference type="InterPro" id="IPR050110">
    <property type="entry name" value="Glyoxalase_II_hydrolase"/>
</dbReference>
<dbReference type="InterPro" id="IPR032282">
    <property type="entry name" value="HAGH_C"/>
</dbReference>
<dbReference type="InterPro" id="IPR017782">
    <property type="entry name" value="Hydroxyacylglutathione_Hdrlase"/>
</dbReference>
<dbReference type="InterPro" id="IPR001279">
    <property type="entry name" value="Metallo-B-lactamas"/>
</dbReference>
<dbReference type="InterPro" id="IPR036866">
    <property type="entry name" value="RibonucZ/Hydroxyglut_hydro"/>
</dbReference>
<dbReference type="NCBIfam" id="TIGR03413">
    <property type="entry name" value="GSH_gloB"/>
    <property type="match status" value="1"/>
</dbReference>
<dbReference type="NCBIfam" id="NF007597">
    <property type="entry name" value="PRK10241.1"/>
    <property type="match status" value="1"/>
</dbReference>
<dbReference type="PANTHER" id="PTHR43705">
    <property type="entry name" value="HYDROXYACYLGLUTATHIONE HYDROLASE"/>
    <property type="match status" value="1"/>
</dbReference>
<dbReference type="PANTHER" id="PTHR43705:SF1">
    <property type="entry name" value="HYDROXYACYLGLUTATHIONE HYDROLASE GLOB"/>
    <property type="match status" value="1"/>
</dbReference>
<dbReference type="Pfam" id="PF16123">
    <property type="entry name" value="HAGH_C"/>
    <property type="match status" value="1"/>
</dbReference>
<dbReference type="Pfam" id="PF00753">
    <property type="entry name" value="Lactamase_B"/>
    <property type="match status" value="1"/>
</dbReference>
<dbReference type="PIRSF" id="PIRSF005457">
    <property type="entry name" value="Glx"/>
    <property type="match status" value="1"/>
</dbReference>
<dbReference type="SMART" id="SM00849">
    <property type="entry name" value="Lactamase_B"/>
    <property type="match status" value="1"/>
</dbReference>
<dbReference type="SUPFAM" id="SSF56281">
    <property type="entry name" value="Metallo-hydrolase/oxidoreductase"/>
    <property type="match status" value="1"/>
</dbReference>
<sequence length="251" mass="28476">MNLNSIPAFDDNYIWVLNDEAGRCLIVDPGDAEPVLNAISANNWQPEAIFLTHHHHDHVGGVKELVEKFPQIVVYGPQETQDKGTTQVVKDGETAFVLGHEFSVIATPGHTLGHICYFSKPYLFCGDTLFSGGCGRLFEGTPSQMYQSIKKLSALPDDTLVCCAHEYTLSNMKFALSILPHDLSINDYYRKVKELRAKNQITLPVILKNERQINVFLRTEDIDLINVINEETLLQQPEERFAWLRSKKDRF</sequence>
<protein>
    <recommendedName>
        <fullName evidence="1">Hydroxyacylglutathione hydrolase</fullName>
        <ecNumber evidence="1">3.1.2.6</ecNumber>
    </recommendedName>
    <alternativeName>
        <fullName evidence="1">Glyoxalase II</fullName>
        <shortName evidence="1">Glx II</shortName>
    </alternativeName>
</protein>
<name>GLO2_ECO45</name>
<comment type="function">
    <text evidence="1">Thiolesterase that catalyzes the hydrolysis of S-D-lactoyl-glutathione to form glutathione and D-lactic acid.</text>
</comment>
<comment type="catalytic activity">
    <reaction evidence="1">
        <text>an S-(2-hydroxyacyl)glutathione + H2O = a 2-hydroxy carboxylate + glutathione + H(+)</text>
        <dbReference type="Rhea" id="RHEA:21864"/>
        <dbReference type="ChEBI" id="CHEBI:15377"/>
        <dbReference type="ChEBI" id="CHEBI:15378"/>
        <dbReference type="ChEBI" id="CHEBI:57925"/>
        <dbReference type="ChEBI" id="CHEBI:58896"/>
        <dbReference type="ChEBI" id="CHEBI:71261"/>
        <dbReference type="EC" id="3.1.2.6"/>
    </reaction>
</comment>
<comment type="cofactor">
    <cofactor evidence="1">
        <name>Zn(2+)</name>
        <dbReference type="ChEBI" id="CHEBI:29105"/>
    </cofactor>
    <text evidence="1">Binds 2 Zn(2+) ions per subunit.</text>
</comment>
<comment type="pathway">
    <text evidence="1">Secondary metabolite metabolism; methylglyoxal degradation; (R)-lactate from methylglyoxal: step 2/2.</text>
</comment>
<comment type="subunit">
    <text evidence="1">Monomer.</text>
</comment>
<comment type="similarity">
    <text evidence="1">Belongs to the metallo-beta-lactamase superfamily. Glyoxalase II family.</text>
</comment>
<gene>
    <name evidence="1" type="primary">gloB</name>
    <name type="ordered locus">ECS88_0227</name>
</gene>